<keyword id="KW-0067">ATP-binding</keyword>
<keyword id="KW-0418">Kinase</keyword>
<keyword id="KW-0547">Nucleotide-binding</keyword>
<keyword id="KW-1185">Reference proteome</keyword>
<keyword id="KW-0808">Transferase</keyword>
<protein>
    <recommendedName>
        <fullName>Putative 1-phosphatidylinositol-3-phosphate 5-kinase FAB1C</fullName>
        <shortName>Phosphatidylinositol 3-phosphate 5-kinase</shortName>
        <ecNumber>2.7.1.150</ecNumber>
    </recommendedName>
    <alternativeName>
        <fullName>Phosphatidylinositol 3-phosphate 5-kinase type III</fullName>
        <shortName>PIPkin-III</shortName>
        <shortName>Type III PIP kinase</shortName>
    </alternativeName>
    <alternativeName>
        <fullName>Protein FORMS APLOID AND BINUCLEATE CELLS 1C</fullName>
    </alternativeName>
</protein>
<accession>Q9SSJ8</accession>
<accession>Q8VZ86</accession>
<proteinExistence type="evidence at transcript level"/>
<sequence length="1648" mass="185494">MGIPDGSLLDLIDKVRSWITSDSSDSLFLLSSSKQDFGIMPIVSKMCHDCGTKVEQGYCCLSCGSCWCKSCSDTEESKMKLCRECDAEVRELRVKSYDKVHPRDSPDPPSSLATESESLASSLEIRDCRNMASIRCYPSRGEEEEARYCGKQLLSPSSDNYQDSSDIESGSVSARHELFSCKSSAGSSPHDSPLRNNFSPLGRFVQHAKDLRSPTVCSFDNHQEQLLADNLVKPGQGVLEQEDHEEEEDKLQQPLDFENNGRIWYPPPPEDENDDAESNYFHYDDEDDDIGDSATEFSLSSSFSSHIPTKEKLGENSNEPLRTVVHDHFRALVAELLRGEELSPSDDGSAGEWLDIVTALAWQAANFVKPDTRAGGSMDPGNYVKIKCVASGNQNESILIRGIVCSKNITHKRMISQYKNPRVMLLAGSLEYQRVAGQLASFNTLLQQENEHMKAIIAKIESLRPNVLLVEKSASSYAQQYLLEKEISLVLNVKRSLLDRIARCTGAVLCPSLDSISTARLGHCELFRTERVLEQHEAGNQSNRKPSRTLMYFEGCPRRLGCTVVLRGSCREELKKVKHVIQYAVFAAYHLSLETSFLADEGASLPKIRLKQPGMVRTASQRRIIDEGISLITQSPTETDSQALLETAAHEDEHTAPMPEHEVCESLCEDFDPTQIFPPSSEVETEQSDTLNGDFANNLVTRSYSSNQLNDLHEPTLCLSSEIPETPTQQPSGEEDNGRGEEENQLVNPQDLPQHESFYEDDVSSEYFSAADSHQSILVSFSSRCVLKESVCERSRLLRIKFYGSFDKPLGRYLKDDLFDKTSSCRSCKELVDAHVLCYSHQNGNLTINVRRLPSMKLPGEQDGKIWMWHRCLRCAHVDGVPPATRRVVMSDAAWGLSFGKFLELSFSNHATANRVASCGHSLQRDCLRFYGFGNMVAFFRYSPINILTVLLPPSMLEFNSHPQQEWIRTEAAELVGKMRTMYTEISDMLNRMEEKSSLLEPEQSEACDLHSRIIGLIDQLVKEKDEYDDALQPIFEENLQIQGSLDILELNRLRRALMIGAHAWDHQLYLLNSQLKKASVFKTGDDNAPRNPEMHDPPKIDRRMQEGSDERDEQSHTDSEANGDNKDPENIPSPGTSLSERIDSAWLGSFQNLEKAETIAETEGFSAVNSSLRRLARPIRVQSFDSAIRFQERIQKGLPPSSLYLSTLRSFHASGEYRNMVRDPVSNVMRTYSQMLPLEVQKLDLIVGSAPTYISSASQMADGARMLIPQRGLNDIVVPVYDDDPASVVSYAINSKEYKEWIVNKGLASSSSSSNLNNRESEPSAFSTWRSLSMDVDYIQHAVYGSSQDDRKSPHLTISFSDRASSSSTATEGKVKFSVTCYFATQFDTLRKTCCPSEVDFVRSLSRCQRWSAQGGKSNVYFAKSLDERFIIKQVVKTELDSFEDFAPEYFKYLKESLSSGSPTCLAKILGIYQVSIKHPKGGKETKMDLMVMENLFYNRRISRIYDLKGSARSRYNPNTSGADKVLLDMNLLETLRTEPIFLGSKAKRSLERAIWNDTNFLASVDVMDYSLLVGFDEERKELVLGIIDFMRQYTWDKHLETWVKASGILGGPKNASPTIVSPKQYKRRFRKAMTTYFLTVPEPWTS</sequence>
<feature type="chain" id="PRO_0000421872" description="Putative 1-phosphatidylinositol-3-phosphate 5-kinase FAB1C">
    <location>
        <begin position="1"/>
        <end position="1648"/>
    </location>
</feature>
<feature type="domain" description="PIPK" evidence="2">
    <location>
        <begin position="1316"/>
        <end position="1639"/>
    </location>
</feature>
<feature type="region of interest" description="Disordered" evidence="3">
    <location>
        <begin position="97"/>
        <end position="116"/>
    </location>
</feature>
<feature type="region of interest" description="Disordered" evidence="3">
    <location>
        <begin position="241"/>
        <end position="276"/>
    </location>
</feature>
<feature type="region of interest" description="Disordered" evidence="3">
    <location>
        <begin position="721"/>
        <end position="746"/>
    </location>
</feature>
<feature type="region of interest" description="Disordered" evidence="3">
    <location>
        <begin position="1083"/>
        <end position="1139"/>
    </location>
</feature>
<feature type="compositionally biased region" description="Basic and acidic residues" evidence="3">
    <location>
        <begin position="97"/>
        <end position="106"/>
    </location>
</feature>
<feature type="compositionally biased region" description="Basic and acidic residues" evidence="3">
    <location>
        <begin position="1084"/>
        <end position="1130"/>
    </location>
</feature>
<dbReference type="EC" id="2.7.1.150"/>
<dbReference type="EMBL" id="AC008148">
    <property type="protein sequence ID" value="AAD55502.1"/>
    <property type="molecule type" value="Genomic_DNA"/>
</dbReference>
<dbReference type="EMBL" id="CP002684">
    <property type="protein sequence ID" value="AEE35150.1"/>
    <property type="molecule type" value="Genomic_DNA"/>
</dbReference>
<dbReference type="EMBL" id="AY065168">
    <property type="protein sequence ID" value="AAL38344.1"/>
    <property type="status" value="ALT_INIT"/>
    <property type="molecule type" value="mRNA"/>
</dbReference>
<dbReference type="EMBL" id="BT010349">
    <property type="protein sequence ID" value="AAQ56792.1"/>
    <property type="molecule type" value="mRNA"/>
</dbReference>
<dbReference type="RefSeq" id="NP_177257.3">
    <property type="nucleotide sequence ID" value="NM_105770.6"/>
</dbReference>
<dbReference type="SMR" id="Q9SSJ8"/>
<dbReference type="FunCoup" id="Q9SSJ8">
    <property type="interactions" value="4000"/>
</dbReference>
<dbReference type="STRING" id="3702.Q9SSJ8"/>
<dbReference type="iPTMnet" id="Q9SSJ8"/>
<dbReference type="PaxDb" id="3702-AT1G71010.1"/>
<dbReference type="ProteomicsDB" id="230843"/>
<dbReference type="EnsemblPlants" id="AT1G71010.1">
    <property type="protein sequence ID" value="AT1G71010.1"/>
    <property type="gene ID" value="AT1G71010"/>
</dbReference>
<dbReference type="GeneID" id="843440"/>
<dbReference type="Gramene" id="AT1G71010.1">
    <property type="protein sequence ID" value="AT1G71010.1"/>
    <property type="gene ID" value="AT1G71010"/>
</dbReference>
<dbReference type="KEGG" id="ath:AT1G71010"/>
<dbReference type="Araport" id="AT1G71010"/>
<dbReference type="TAIR" id="AT1G71010">
    <property type="gene designation" value="FAB1C"/>
</dbReference>
<dbReference type="eggNOG" id="KOG0230">
    <property type="taxonomic scope" value="Eukaryota"/>
</dbReference>
<dbReference type="HOGENOM" id="CLU_000480_4_0_1"/>
<dbReference type="InParanoid" id="Q9SSJ8"/>
<dbReference type="OMA" id="WQSFGSM"/>
<dbReference type="PhylomeDB" id="Q9SSJ8"/>
<dbReference type="BioCyc" id="ARA:AT1G71010-MONOMER"/>
<dbReference type="PRO" id="PR:Q9SSJ8"/>
<dbReference type="Proteomes" id="UP000006548">
    <property type="component" value="Chromosome 1"/>
</dbReference>
<dbReference type="ExpressionAtlas" id="Q9SSJ8">
    <property type="expression patterns" value="baseline and differential"/>
</dbReference>
<dbReference type="GO" id="GO:0000285">
    <property type="term" value="F:1-phosphatidylinositol-3-phosphate 5-kinase activity"/>
    <property type="evidence" value="ECO:0000314"/>
    <property type="project" value="TAIR"/>
</dbReference>
<dbReference type="GO" id="GO:0005524">
    <property type="term" value="F:ATP binding"/>
    <property type="evidence" value="ECO:0007669"/>
    <property type="project" value="UniProtKB-KW"/>
</dbReference>
<dbReference type="GO" id="GO:0046488">
    <property type="term" value="P:phosphatidylinositol metabolic process"/>
    <property type="evidence" value="ECO:0007669"/>
    <property type="project" value="InterPro"/>
</dbReference>
<dbReference type="GO" id="GO:0090332">
    <property type="term" value="P:stomatal closure"/>
    <property type="evidence" value="ECO:0000315"/>
    <property type="project" value="TAIR"/>
</dbReference>
<dbReference type="CDD" id="cd03334">
    <property type="entry name" value="Fab1_TCP"/>
    <property type="match status" value="1"/>
</dbReference>
<dbReference type="CDD" id="cd17300">
    <property type="entry name" value="PIPKc_PIKfyve"/>
    <property type="match status" value="1"/>
</dbReference>
<dbReference type="FunFam" id="3.30.810.10:FF:000001">
    <property type="entry name" value="1-phosphatidylinositol 3-phosphate 5-kinase FAB1"/>
    <property type="match status" value="1"/>
</dbReference>
<dbReference type="FunFam" id="3.50.7.10:FF:000007">
    <property type="entry name" value="1-phosphatidylinositol 3-phosphate 5-kinase isoform X1"/>
    <property type="match status" value="1"/>
</dbReference>
<dbReference type="FunFam" id="3.30.800.10:FF:000010">
    <property type="entry name" value="Putative 1-phosphatidylinositol-3-phosphate 5-kinase FAB1C"/>
    <property type="match status" value="1"/>
</dbReference>
<dbReference type="Gene3D" id="3.30.810.10">
    <property type="entry name" value="2-Layer Sandwich"/>
    <property type="match status" value="1"/>
</dbReference>
<dbReference type="Gene3D" id="3.50.7.10">
    <property type="entry name" value="GroEL"/>
    <property type="match status" value="1"/>
</dbReference>
<dbReference type="Gene3D" id="3.30.800.10">
    <property type="entry name" value="Phosphatidylinositol Phosphate Kinase II Beta"/>
    <property type="match status" value="1"/>
</dbReference>
<dbReference type="InterPro" id="IPR002423">
    <property type="entry name" value="Cpn60/GroEL/TCP-1"/>
</dbReference>
<dbReference type="InterPro" id="IPR027409">
    <property type="entry name" value="GroEL-like_apical_dom_sf"/>
</dbReference>
<dbReference type="InterPro" id="IPR044769">
    <property type="entry name" value="PIKfyve_PIPKc"/>
</dbReference>
<dbReference type="InterPro" id="IPR027483">
    <property type="entry name" value="PInositol-4-P-4/5-kinase_C_sf"/>
</dbReference>
<dbReference type="InterPro" id="IPR002498">
    <property type="entry name" value="PInositol-4-P-4/5-kinase_core"/>
</dbReference>
<dbReference type="InterPro" id="IPR027484">
    <property type="entry name" value="PInositol-4-P-5-kinase_N"/>
</dbReference>
<dbReference type="PANTHER" id="PTHR45748">
    <property type="entry name" value="1-PHOSPHATIDYLINOSITOL 3-PHOSPHATE 5-KINASE-RELATED"/>
    <property type="match status" value="1"/>
</dbReference>
<dbReference type="PANTHER" id="PTHR45748:SF14">
    <property type="entry name" value="1-PHOSPHATIDYLINOSITOL-3-PHOSPHATE 5-KINASE FAB1C-RELATED"/>
    <property type="match status" value="1"/>
</dbReference>
<dbReference type="Pfam" id="PF00118">
    <property type="entry name" value="Cpn60_TCP1"/>
    <property type="match status" value="1"/>
</dbReference>
<dbReference type="Pfam" id="PF01504">
    <property type="entry name" value="PIP5K"/>
    <property type="match status" value="1"/>
</dbReference>
<dbReference type="SMART" id="SM00330">
    <property type="entry name" value="PIPKc"/>
    <property type="match status" value="1"/>
</dbReference>
<dbReference type="SUPFAM" id="SSF52029">
    <property type="entry name" value="GroEL apical domain-like"/>
    <property type="match status" value="1"/>
</dbReference>
<dbReference type="SUPFAM" id="SSF56104">
    <property type="entry name" value="SAICAR synthase-like"/>
    <property type="match status" value="1"/>
</dbReference>
<dbReference type="PROSITE" id="PS51455">
    <property type="entry name" value="PIPK"/>
    <property type="match status" value="1"/>
</dbReference>
<gene>
    <name type="primary">FAB1C</name>
    <name type="ordered locus">At1g71010</name>
    <name type="ORF">F15H11.20</name>
</gene>
<comment type="function">
    <text evidence="1">The PI(3,5)P2 regulatory complex regulates both the synthesis and turnover of phosphatidylinositol 3,5-bisphosphate (PtdIns(3,5)P2). Catalyzes the phosphorylation of phosphatidylinositol 3-phosphate on the fifth hydroxyl of the myo-inositol ring, to form phosphatidylinositol 3,5-bisphosphate (By similarity).</text>
</comment>
<comment type="catalytic activity">
    <reaction>
        <text>a 1,2-diacyl-sn-glycero-3-phospho-(1D-myo-inositol-3-phosphate) + ATP = a 1,2-diacyl-sn-glycero-3-phospho-(1D-myo-inositol-3,5-bisphosphate) + ADP + H(+)</text>
        <dbReference type="Rhea" id="RHEA:13609"/>
        <dbReference type="ChEBI" id="CHEBI:15378"/>
        <dbReference type="ChEBI" id="CHEBI:30616"/>
        <dbReference type="ChEBI" id="CHEBI:57923"/>
        <dbReference type="ChEBI" id="CHEBI:58088"/>
        <dbReference type="ChEBI" id="CHEBI:456216"/>
        <dbReference type="EC" id="2.7.1.150"/>
    </reaction>
</comment>
<comment type="cofactor">
    <cofactor evidence="1">
        <name>Mg(2+)</name>
        <dbReference type="ChEBI" id="CHEBI:18420"/>
    </cofactor>
    <cofactor evidence="1">
        <name>Mn(2+)</name>
        <dbReference type="ChEBI" id="CHEBI:29035"/>
    </cofactor>
</comment>
<comment type="subunit">
    <text evidence="1">Component of the PI(3,5)P2 regulatory complex at least composed of ATG18, SAC/FIG4, FAB1 and VAC14.</text>
</comment>
<comment type="caution">
    <text evidence="4">Lacks the FYVE domain, necessary to efficiently target the protein to membranes containing the phosphatidylinositol-3P substrate. Therefore, its molecular function remains unknown.</text>
</comment>
<comment type="sequence caution" evidence="4">
    <conflict type="erroneous initiation">
        <sequence resource="EMBL-CDS" id="AAL38344"/>
    </conflict>
    <text>Truncated N-terminus.</text>
</comment>
<reference key="1">
    <citation type="journal article" date="2000" name="Nature">
        <title>Sequence and analysis of chromosome 1 of the plant Arabidopsis thaliana.</title>
        <authorList>
            <person name="Theologis A."/>
            <person name="Ecker J.R."/>
            <person name="Palm C.J."/>
            <person name="Federspiel N.A."/>
            <person name="Kaul S."/>
            <person name="White O."/>
            <person name="Alonso J."/>
            <person name="Altafi H."/>
            <person name="Araujo R."/>
            <person name="Bowman C.L."/>
            <person name="Brooks S.Y."/>
            <person name="Buehler E."/>
            <person name="Chan A."/>
            <person name="Chao Q."/>
            <person name="Chen H."/>
            <person name="Cheuk R.F."/>
            <person name="Chin C.W."/>
            <person name="Chung M.K."/>
            <person name="Conn L."/>
            <person name="Conway A.B."/>
            <person name="Conway A.R."/>
            <person name="Creasy T.H."/>
            <person name="Dewar K."/>
            <person name="Dunn P."/>
            <person name="Etgu P."/>
            <person name="Feldblyum T.V."/>
            <person name="Feng J.-D."/>
            <person name="Fong B."/>
            <person name="Fujii C.Y."/>
            <person name="Gill J.E."/>
            <person name="Goldsmith A.D."/>
            <person name="Haas B."/>
            <person name="Hansen N.F."/>
            <person name="Hughes B."/>
            <person name="Huizar L."/>
            <person name="Hunter J.L."/>
            <person name="Jenkins J."/>
            <person name="Johnson-Hopson C."/>
            <person name="Khan S."/>
            <person name="Khaykin E."/>
            <person name="Kim C.J."/>
            <person name="Koo H.L."/>
            <person name="Kremenetskaia I."/>
            <person name="Kurtz D.B."/>
            <person name="Kwan A."/>
            <person name="Lam B."/>
            <person name="Langin-Hooper S."/>
            <person name="Lee A."/>
            <person name="Lee J.M."/>
            <person name="Lenz C.A."/>
            <person name="Li J.H."/>
            <person name="Li Y.-P."/>
            <person name="Lin X."/>
            <person name="Liu S.X."/>
            <person name="Liu Z.A."/>
            <person name="Luros J.S."/>
            <person name="Maiti R."/>
            <person name="Marziali A."/>
            <person name="Militscher J."/>
            <person name="Miranda M."/>
            <person name="Nguyen M."/>
            <person name="Nierman W.C."/>
            <person name="Osborne B.I."/>
            <person name="Pai G."/>
            <person name="Peterson J."/>
            <person name="Pham P.K."/>
            <person name="Rizzo M."/>
            <person name="Rooney T."/>
            <person name="Rowley D."/>
            <person name="Sakano H."/>
            <person name="Salzberg S.L."/>
            <person name="Schwartz J.R."/>
            <person name="Shinn P."/>
            <person name="Southwick A.M."/>
            <person name="Sun H."/>
            <person name="Tallon L.J."/>
            <person name="Tambunga G."/>
            <person name="Toriumi M.J."/>
            <person name="Town C.D."/>
            <person name="Utterback T."/>
            <person name="Van Aken S."/>
            <person name="Vaysberg M."/>
            <person name="Vysotskaia V.S."/>
            <person name="Walker M."/>
            <person name="Wu D."/>
            <person name="Yu G."/>
            <person name="Fraser C.M."/>
            <person name="Venter J.C."/>
            <person name="Davis R.W."/>
        </authorList>
    </citation>
    <scope>NUCLEOTIDE SEQUENCE [LARGE SCALE GENOMIC DNA]</scope>
    <source>
        <strain>cv. Columbia</strain>
    </source>
</reference>
<reference key="2">
    <citation type="journal article" date="2017" name="Plant J.">
        <title>Araport11: a complete reannotation of the Arabidopsis thaliana reference genome.</title>
        <authorList>
            <person name="Cheng C.Y."/>
            <person name="Krishnakumar V."/>
            <person name="Chan A.P."/>
            <person name="Thibaud-Nissen F."/>
            <person name="Schobel S."/>
            <person name="Town C.D."/>
        </authorList>
    </citation>
    <scope>GENOME REANNOTATION</scope>
    <source>
        <strain>cv. Columbia</strain>
    </source>
</reference>
<reference key="3">
    <citation type="journal article" date="2003" name="Science">
        <title>Empirical analysis of transcriptional activity in the Arabidopsis genome.</title>
        <authorList>
            <person name="Yamada K."/>
            <person name="Lim J."/>
            <person name="Dale J.M."/>
            <person name="Chen H."/>
            <person name="Shinn P."/>
            <person name="Palm C.J."/>
            <person name="Southwick A.M."/>
            <person name="Wu H.C."/>
            <person name="Kim C.J."/>
            <person name="Nguyen M."/>
            <person name="Pham P.K."/>
            <person name="Cheuk R.F."/>
            <person name="Karlin-Newmann G."/>
            <person name="Liu S.X."/>
            <person name="Lam B."/>
            <person name="Sakano H."/>
            <person name="Wu T."/>
            <person name="Yu G."/>
            <person name="Miranda M."/>
            <person name="Quach H.L."/>
            <person name="Tripp M."/>
            <person name="Chang C.H."/>
            <person name="Lee J.M."/>
            <person name="Toriumi M.J."/>
            <person name="Chan M.M."/>
            <person name="Tang C.C."/>
            <person name="Onodera C.S."/>
            <person name="Deng J.M."/>
            <person name="Akiyama K."/>
            <person name="Ansari Y."/>
            <person name="Arakawa T."/>
            <person name="Banh J."/>
            <person name="Banno F."/>
            <person name="Bowser L."/>
            <person name="Brooks S.Y."/>
            <person name="Carninci P."/>
            <person name="Chao Q."/>
            <person name="Choy N."/>
            <person name="Enju A."/>
            <person name="Goldsmith A.D."/>
            <person name="Gurjal M."/>
            <person name="Hansen N.F."/>
            <person name="Hayashizaki Y."/>
            <person name="Johnson-Hopson C."/>
            <person name="Hsuan V.W."/>
            <person name="Iida K."/>
            <person name="Karnes M."/>
            <person name="Khan S."/>
            <person name="Koesema E."/>
            <person name="Ishida J."/>
            <person name="Jiang P.X."/>
            <person name="Jones T."/>
            <person name="Kawai J."/>
            <person name="Kamiya A."/>
            <person name="Meyers C."/>
            <person name="Nakajima M."/>
            <person name="Narusaka M."/>
            <person name="Seki M."/>
            <person name="Sakurai T."/>
            <person name="Satou M."/>
            <person name="Tamse R."/>
            <person name="Vaysberg M."/>
            <person name="Wallender E.K."/>
            <person name="Wong C."/>
            <person name="Yamamura Y."/>
            <person name="Yuan S."/>
            <person name="Shinozaki K."/>
            <person name="Davis R.W."/>
            <person name="Theologis A."/>
            <person name="Ecker J.R."/>
        </authorList>
    </citation>
    <scope>NUCLEOTIDE SEQUENCE [LARGE SCALE MRNA] OF 736-1648</scope>
    <source>
        <strain>cv. Columbia</strain>
    </source>
</reference>
<reference key="4">
    <citation type="journal article" date="2002" name="Plant Physiol.">
        <title>Inositol phospholipid metabolism in Arabidopsis. Characterized and putative isoforms of inositol phospholipid kinase and phosphoinositide-specific phospholipase C.</title>
        <authorList>
            <person name="Mueller-Roeber B."/>
            <person name="Pical C."/>
        </authorList>
    </citation>
    <scope>GENE FAMILY</scope>
    <scope>REVIEW</scope>
</reference>
<evidence type="ECO:0000250" key="1"/>
<evidence type="ECO:0000255" key="2">
    <source>
        <dbReference type="PROSITE-ProRule" id="PRU00781"/>
    </source>
</evidence>
<evidence type="ECO:0000256" key="3">
    <source>
        <dbReference type="SAM" id="MobiDB-lite"/>
    </source>
</evidence>
<evidence type="ECO:0000305" key="4"/>
<name>FAB1C_ARATH</name>
<organism>
    <name type="scientific">Arabidopsis thaliana</name>
    <name type="common">Mouse-ear cress</name>
    <dbReference type="NCBI Taxonomy" id="3702"/>
    <lineage>
        <taxon>Eukaryota</taxon>
        <taxon>Viridiplantae</taxon>
        <taxon>Streptophyta</taxon>
        <taxon>Embryophyta</taxon>
        <taxon>Tracheophyta</taxon>
        <taxon>Spermatophyta</taxon>
        <taxon>Magnoliopsida</taxon>
        <taxon>eudicotyledons</taxon>
        <taxon>Gunneridae</taxon>
        <taxon>Pentapetalae</taxon>
        <taxon>rosids</taxon>
        <taxon>malvids</taxon>
        <taxon>Brassicales</taxon>
        <taxon>Brassicaceae</taxon>
        <taxon>Camelineae</taxon>
        <taxon>Arabidopsis</taxon>
    </lineage>
</organism>